<sequence length="302" mass="31545">MSNGTVTAAIVGSGNISTDLLYKLLRSQAIEPRWMIGIDPESEGLKRARGLGLETSHEGVDWLLAQSELPDMIFEATSAYVHRAAAPRYAEAGIRAVDLTPAAVGPAVVPPVNLGANLDAPNVNMITCGGQATIPIVAAVSRVVPVPYAEIVASVSSVSAGPGTRANIDEFTKTTSRGVETIGGAQRGKAIIILNPAEPPMIMRDTIFCAIPEDADTDAIADSIHRMVADIQQYVPGYRLLNEPQFDEPSVVSGGLAKVSVFVEVEGAGDFLPPYAGNLDIMTAAATKVGEVIAGQITSARV</sequence>
<organism>
    <name type="scientific">Nocardia farcinica (strain IFM 10152)</name>
    <dbReference type="NCBI Taxonomy" id="247156"/>
    <lineage>
        <taxon>Bacteria</taxon>
        <taxon>Bacillati</taxon>
        <taxon>Actinomycetota</taxon>
        <taxon>Actinomycetes</taxon>
        <taxon>Mycobacteriales</taxon>
        <taxon>Nocardiaceae</taxon>
        <taxon>Nocardia</taxon>
    </lineage>
</organism>
<gene>
    <name type="ordered locus">NFA_4660</name>
</gene>
<name>ACDH1_NOCFA</name>
<protein>
    <recommendedName>
        <fullName evidence="1">Acetaldehyde dehydrogenase 1</fullName>
        <ecNumber evidence="1">1.2.1.10</ecNumber>
    </recommendedName>
    <alternativeName>
        <fullName evidence="1">Acetaldehyde dehydrogenase [acetylating] 1</fullName>
    </alternativeName>
</protein>
<feature type="chain" id="PRO_0000387695" description="Acetaldehyde dehydrogenase 1">
    <location>
        <begin position="1"/>
        <end position="302"/>
    </location>
</feature>
<feature type="active site" description="Acyl-thioester intermediate" evidence="1">
    <location>
        <position position="128"/>
    </location>
</feature>
<feature type="binding site" evidence="1">
    <location>
        <begin position="13"/>
        <end position="16"/>
    </location>
    <ligand>
        <name>NAD(+)</name>
        <dbReference type="ChEBI" id="CHEBI:57540"/>
    </ligand>
</feature>
<feature type="binding site" evidence="1">
    <location>
        <begin position="159"/>
        <end position="167"/>
    </location>
    <ligand>
        <name>NAD(+)</name>
        <dbReference type="ChEBI" id="CHEBI:57540"/>
    </ligand>
</feature>
<feature type="binding site" evidence="1">
    <location>
        <position position="278"/>
    </location>
    <ligand>
        <name>NAD(+)</name>
        <dbReference type="ChEBI" id="CHEBI:57540"/>
    </ligand>
</feature>
<accession>Q5Z2N3</accession>
<keyword id="KW-0058">Aromatic hydrocarbons catabolism</keyword>
<keyword id="KW-0520">NAD</keyword>
<keyword id="KW-0560">Oxidoreductase</keyword>
<keyword id="KW-1185">Reference proteome</keyword>
<proteinExistence type="inferred from homology"/>
<comment type="catalytic activity">
    <reaction evidence="1">
        <text>acetaldehyde + NAD(+) + CoA = acetyl-CoA + NADH + H(+)</text>
        <dbReference type="Rhea" id="RHEA:23288"/>
        <dbReference type="ChEBI" id="CHEBI:15343"/>
        <dbReference type="ChEBI" id="CHEBI:15378"/>
        <dbReference type="ChEBI" id="CHEBI:57287"/>
        <dbReference type="ChEBI" id="CHEBI:57288"/>
        <dbReference type="ChEBI" id="CHEBI:57540"/>
        <dbReference type="ChEBI" id="CHEBI:57945"/>
        <dbReference type="EC" id="1.2.1.10"/>
    </reaction>
</comment>
<comment type="similarity">
    <text evidence="1">Belongs to the acetaldehyde dehydrogenase family.</text>
</comment>
<evidence type="ECO:0000255" key="1">
    <source>
        <dbReference type="HAMAP-Rule" id="MF_01657"/>
    </source>
</evidence>
<dbReference type="EC" id="1.2.1.10" evidence="1"/>
<dbReference type="EMBL" id="AP006618">
    <property type="protein sequence ID" value="BAD55308.1"/>
    <property type="molecule type" value="Genomic_DNA"/>
</dbReference>
<dbReference type="RefSeq" id="WP_011206995.1">
    <property type="nucleotide sequence ID" value="NC_006361.1"/>
</dbReference>
<dbReference type="SMR" id="Q5Z2N3"/>
<dbReference type="STRING" id="247156.NFA_4660"/>
<dbReference type="GeneID" id="61131302"/>
<dbReference type="KEGG" id="nfa:NFA_4660"/>
<dbReference type="eggNOG" id="COG4569">
    <property type="taxonomic scope" value="Bacteria"/>
</dbReference>
<dbReference type="HOGENOM" id="CLU_062208_0_0_11"/>
<dbReference type="OrthoDB" id="9786743at2"/>
<dbReference type="Proteomes" id="UP000006820">
    <property type="component" value="Chromosome"/>
</dbReference>
<dbReference type="GO" id="GO:0008774">
    <property type="term" value="F:acetaldehyde dehydrogenase (acetylating) activity"/>
    <property type="evidence" value="ECO:0007669"/>
    <property type="project" value="UniProtKB-UniRule"/>
</dbReference>
<dbReference type="GO" id="GO:0051287">
    <property type="term" value="F:NAD binding"/>
    <property type="evidence" value="ECO:0007669"/>
    <property type="project" value="UniProtKB-UniRule"/>
</dbReference>
<dbReference type="GO" id="GO:0009056">
    <property type="term" value="P:catabolic process"/>
    <property type="evidence" value="ECO:0007669"/>
    <property type="project" value="UniProtKB-KW"/>
</dbReference>
<dbReference type="CDD" id="cd23933">
    <property type="entry name" value="ALDH_C"/>
    <property type="match status" value="1"/>
</dbReference>
<dbReference type="Gene3D" id="3.30.360.10">
    <property type="entry name" value="Dihydrodipicolinate Reductase, domain 2"/>
    <property type="match status" value="1"/>
</dbReference>
<dbReference type="Gene3D" id="3.40.50.720">
    <property type="entry name" value="NAD(P)-binding Rossmann-like Domain"/>
    <property type="match status" value="1"/>
</dbReference>
<dbReference type="HAMAP" id="MF_01657">
    <property type="entry name" value="Ac_ald_DH_ac"/>
    <property type="match status" value="1"/>
</dbReference>
<dbReference type="InterPro" id="IPR003361">
    <property type="entry name" value="Acetaldehyde_dehydrogenase"/>
</dbReference>
<dbReference type="InterPro" id="IPR015426">
    <property type="entry name" value="Acetylaldehyde_DH_C"/>
</dbReference>
<dbReference type="InterPro" id="IPR036291">
    <property type="entry name" value="NAD(P)-bd_dom_sf"/>
</dbReference>
<dbReference type="InterPro" id="IPR000534">
    <property type="entry name" value="Semialdehyde_DH_NAD-bd"/>
</dbReference>
<dbReference type="NCBIfam" id="TIGR03215">
    <property type="entry name" value="ac_ald_DH_ac"/>
    <property type="match status" value="1"/>
</dbReference>
<dbReference type="NCBIfam" id="NF006157">
    <property type="entry name" value="PRK08300.1"/>
    <property type="match status" value="1"/>
</dbReference>
<dbReference type="Pfam" id="PF09290">
    <property type="entry name" value="AcetDehyd-dimer"/>
    <property type="match status" value="1"/>
</dbReference>
<dbReference type="PIRSF" id="PIRSF015689">
    <property type="entry name" value="Actaldh_dh_actl"/>
    <property type="match status" value="1"/>
</dbReference>
<dbReference type="SMART" id="SM00859">
    <property type="entry name" value="Semialdhyde_dh"/>
    <property type="match status" value="1"/>
</dbReference>
<dbReference type="SUPFAM" id="SSF55347">
    <property type="entry name" value="Glyceraldehyde-3-phosphate dehydrogenase-like, C-terminal domain"/>
    <property type="match status" value="1"/>
</dbReference>
<dbReference type="SUPFAM" id="SSF51735">
    <property type="entry name" value="NAD(P)-binding Rossmann-fold domains"/>
    <property type="match status" value="1"/>
</dbReference>
<reference key="1">
    <citation type="journal article" date="2004" name="Proc. Natl. Acad. Sci. U.S.A.">
        <title>The complete genomic sequence of Nocardia farcinica IFM 10152.</title>
        <authorList>
            <person name="Ishikawa J."/>
            <person name="Yamashita A."/>
            <person name="Mikami Y."/>
            <person name="Hoshino Y."/>
            <person name="Kurita H."/>
            <person name="Hotta K."/>
            <person name="Shiba T."/>
            <person name="Hattori M."/>
        </authorList>
    </citation>
    <scope>NUCLEOTIDE SEQUENCE [LARGE SCALE GENOMIC DNA]</scope>
    <source>
        <strain>IFM 10152</strain>
    </source>
</reference>